<reference key="1">
    <citation type="journal article" date="2002" name="Mol. Microbiol.">
        <title>Genome sequence of Streptococcus agalactiae, a pathogen causing invasive neonatal disease.</title>
        <authorList>
            <person name="Glaser P."/>
            <person name="Rusniok C."/>
            <person name="Buchrieser C."/>
            <person name="Chevalier F."/>
            <person name="Frangeul L."/>
            <person name="Msadek T."/>
            <person name="Zouine M."/>
            <person name="Couve E."/>
            <person name="Lalioui L."/>
            <person name="Poyart C."/>
            <person name="Trieu-Cuot P."/>
            <person name="Kunst F."/>
        </authorList>
    </citation>
    <scope>NUCLEOTIDE SEQUENCE [LARGE SCALE GENOMIC DNA]</scope>
    <source>
        <strain>NEM316</strain>
    </source>
</reference>
<accession>Q8E611</accession>
<organism>
    <name type="scientific">Streptococcus agalactiae serotype III (strain NEM316)</name>
    <dbReference type="NCBI Taxonomy" id="211110"/>
    <lineage>
        <taxon>Bacteria</taxon>
        <taxon>Bacillati</taxon>
        <taxon>Bacillota</taxon>
        <taxon>Bacilli</taxon>
        <taxon>Lactobacillales</taxon>
        <taxon>Streptococcaceae</taxon>
        <taxon>Streptococcus</taxon>
    </lineage>
</organism>
<feature type="chain" id="PRO_0000165446" description="S-adenosylmethionine:tRNA ribosyltransferase-isomerase">
    <location>
        <begin position="1"/>
        <end position="342"/>
    </location>
</feature>
<name>QUEA_STRA3</name>
<comment type="function">
    <text evidence="1">Transfers and isomerizes the ribose moiety from AdoMet to the 7-aminomethyl group of 7-deazaguanine (preQ1-tRNA) to give epoxyqueuosine (oQ-tRNA).</text>
</comment>
<comment type="catalytic activity">
    <reaction evidence="1">
        <text>7-aminomethyl-7-carbaguanosine(34) in tRNA + S-adenosyl-L-methionine = epoxyqueuosine(34) in tRNA + adenine + L-methionine + 2 H(+)</text>
        <dbReference type="Rhea" id="RHEA:32155"/>
        <dbReference type="Rhea" id="RHEA-COMP:10342"/>
        <dbReference type="Rhea" id="RHEA-COMP:18582"/>
        <dbReference type="ChEBI" id="CHEBI:15378"/>
        <dbReference type="ChEBI" id="CHEBI:16708"/>
        <dbReference type="ChEBI" id="CHEBI:57844"/>
        <dbReference type="ChEBI" id="CHEBI:59789"/>
        <dbReference type="ChEBI" id="CHEBI:82833"/>
        <dbReference type="ChEBI" id="CHEBI:194443"/>
        <dbReference type="EC" id="2.4.99.17"/>
    </reaction>
</comment>
<comment type="pathway">
    <text evidence="1">tRNA modification; tRNA-queuosine biosynthesis.</text>
</comment>
<comment type="subunit">
    <text evidence="1">Monomer.</text>
</comment>
<comment type="subcellular location">
    <subcellularLocation>
        <location evidence="1">Cytoplasm</location>
    </subcellularLocation>
</comment>
<comment type="similarity">
    <text evidence="1">Belongs to the QueA family.</text>
</comment>
<sequence length="342" mass="38498">MNTNDFDFYLPEELIAQTPLEKRDASKLLVIDHKNKTMTDSHFDHILDELKPGDALVMNNTRVLPARLYGEKPDTHGHIELLLLKNTEGDQWEVLAKPAKRLRVGTKVSFGDGRLIATVTKELEHGGRIVEFSYDGIFLEVLESLGEMPLPPYIHEKLEDRDRYQTVYAKENGSAAAPTAGLHFTKELLEKIETKGVKLVYLTLHVGLGTFRPVSVDNLDEHEMHSEFYQLSKEAADTLNAVKESGGRIVAVGTTSIRTLETIGSKFNGELKADSGWTNIFIKPGYQFKVVDAFSTNFHLPKSTLVMLVSAFAGRDFVLEAYNHAVEERYRFFSFGDAMFVK</sequence>
<protein>
    <recommendedName>
        <fullName evidence="1">S-adenosylmethionine:tRNA ribosyltransferase-isomerase</fullName>
        <ecNumber evidence="1">2.4.99.17</ecNumber>
    </recommendedName>
    <alternativeName>
        <fullName evidence="1">Queuosine biosynthesis protein QueA</fullName>
    </alternativeName>
</protein>
<evidence type="ECO:0000255" key="1">
    <source>
        <dbReference type="HAMAP-Rule" id="MF_00113"/>
    </source>
</evidence>
<gene>
    <name evidence="1" type="primary">queA</name>
    <name type="ordered locus">gbs0817</name>
</gene>
<proteinExistence type="inferred from homology"/>
<dbReference type="EC" id="2.4.99.17" evidence="1"/>
<dbReference type="EMBL" id="AL766847">
    <property type="protein sequence ID" value="CAD46461.1"/>
    <property type="molecule type" value="Genomic_DNA"/>
</dbReference>
<dbReference type="RefSeq" id="WP_001095266.1">
    <property type="nucleotide sequence ID" value="NC_004368.1"/>
</dbReference>
<dbReference type="SMR" id="Q8E611"/>
<dbReference type="KEGG" id="san:gbs0817"/>
<dbReference type="eggNOG" id="COG0809">
    <property type="taxonomic scope" value="Bacteria"/>
</dbReference>
<dbReference type="HOGENOM" id="CLU_039110_1_0_9"/>
<dbReference type="UniPathway" id="UPA00392"/>
<dbReference type="Proteomes" id="UP000000823">
    <property type="component" value="Chromosome"/>
</dbReference>
<dbReference type="GO" id="GO:0005737">
    <property type="term" value="C:cytoplasm"/>
    <property type="evidence" value="ECO:0007669"/>
    <property type="project" value="UniProtKB-SubCell"/>
</dbReference>
<dbReference type="GO" id="GO:0051075">
    <property type="term" value="F:S-adenosylmethionine:tRNA ribosyltransferase-isomerase activity"/>
    <property type="evidence" value="ECO:0007669"/>
    <property type="project" value="UniProtKB-EC"/>
</dbReference>
<dbReference type="GO" id="GO:0008616">
    <property type="term" value="P:queuosine biosynthetic process"/>
    <property type="evidence" value="ECO:0007669"/>
    <property type="project" value="UniProtKB-UniRule"/>
</dbReference>
<dbReference type="GO" id="GO:0002099">
    <property type="term" value="P:tRNA wobble guanine modification"/>
    <property type="evidence" value="ECO:0007669"/>
    <property type="project" value="TreeGrafter"/>
</dbReference>
<dbReference type="FunFam" id="2.40.10.240:FF:000002">
    <property type="entry name" value="S-adenosylmethionine:tRNA ribosyltransferase-isomerase"/>
    <property type="match status" value="1"/>
</dbReference>
<dbReference type="FunFam" id="3.40.1780.10:FF:000001">
    <property type="entry name" value="S-adenosylmethionine:tRNA ribosyltransferase-isomerase"/>
    <property type="match status" value="1"/>
</dbReference>
<dbReference type="Gene3D" id="2.40.10.240">
    <property type="entry name" value="QueA-like"/>
    <property type="match status" value="1"/>
</dbReference>
<dbReference type="Gene3D" id="3.40.1780.10">
    <property type="entry name" value="QueA-like"/>
    <property type="match status" value="1"/>
</dbReference>
<dbReference type="HAMAP" id="MF_00113">
    <property type="entry name" value="QueA"/>
    <property type="match status" value="1"/>
</dbReference>
<dbReference type="InterPro" id="IPR003699">
    <property type="entry name" value="QueA"/>
</dbReference>
<dbReference type="InterPro" id="IPR042118">
    <property type="entry name" value="QueA_dom1"/>
</dbReference>
<dbReference type="InterPro" id="IPR042119">
    <property type="entry name" value="QueA_dom2"/>
</dbReference>
<dbReference type="InterPro" id="IPR036100">
    <property type="entry name" value="QueA_sf"/>
</dbReference>
<dbReference type="NCBIfam" id="NF001140">
    <property type="entry name" value="PRK00147.1"/>
    <property type="match status" value="1"/>
</dbReference>
<dbReference type="NCBIfam" id="TIGR00113">
    <property type="entry name" value="queA"/>
    <property type="match status" value="1"/>
</dbReference>
<dbReference type="PANTHER" id="PTHR30307">
    <property type="entry name" value="S-ADENOSYLMETHIONINE:TRNA RIBOSYLTRANSFERASE-ISOMERASE"/>
    <property type="match status" value="1"/>
</dbReference>
<dbReference type="PANTHER" id="PTHR30307:SF0">
    <property type="entry name" value="S-ADENOSYLMETHIONINE:TRNA RIBOSYLTRANSFERASE-ISOMERASE"/>
    <property type="match status" value="1"/>
</dbReference>
<dbReference type="Pfam" id="PF02547">
    <property type="entry name" value="Queuosine_synth"/>
    <property type="match status" value="1"/>
</dbReference>
<dbReference type="SUPFAM" id="SSF111337">
    <property type="entry name" value="QueA-like"/>
    <property type="match status" value="1"/>
</dbReference>
<keyword id="KW-0963">Cytoplasm</keyword>
<keyword id="KW-0671">Queuosine biosynthesis</keyword>
<keyword id="KW-0949">S-adenosyl-L-methionine</keyword>
<keyword id="KW-0808">Transferase</keyword>